<sequence>MKFWRERERENKEQILAPLCGQVRVLVVGDSGVGKTSLVHLINKGSSIVRPPQTIGCTVGVKHITYGSPASSSSSIQGDSERDFFVELWDVSGHERYKDCRSLFYSQINGVIFVHDLSQRRTKTSLQKWASEVAATGTFSAPLPSGGPGGLPVPYIVVGNKADIAAKEGTKGSSGNLVDAARHWVEKQGLLPSSSEDLPLFESFPGNGGLIAAAKETRYDKEALNKFFRMLIRRRYFSDELPAASPWSISPVPTSSSQRLDEITSDDDQFYKRTSFHGDPYKYNNTIPPLPAQRNLTPPPTLYPQQPVSTPDNYTIPRYSLSSVQETTNNGSARSKRMDINV</sequence>
<name>LIIP1_ARATH</name>
<reference key="1">
    <citation type="journal article" date="2000" name="DNA Res.">
        <title>Structural analysis of Arabidopsis thaliana chromosome 5. X. Sequence features of the regions of 3,076,755 bp covered by sixty P1 and TAC clones.</title>
        <authorList>
            <person name="Sato S."/>
            <person name="Nakamura Y."/>
            <person name="Kaneko T."/>
            <person name="Katoh T."/>
            <person name="Asamizu E."/>
            <person name="Kotani H."/>
            <person name="Tabata S."/>
        </authorList>
    </citation>
    <scope>NUCLEOTIDE SEQUENCE [LARGE SCALE GENOMIC DNA]</scope>
    <source>
        <strain>cv. Columbia</strain>
    </source>
</reference>
<reference key="2">
    <citation type="journal article" date="2017" name="Plant J.">
        <title>Araport11: a complete reannotation of the Arabidopsis thaliana reference genome.</title>
        <authorList>
            <person name="Cheng C.Y."/>
            <person name="Krishnakumar V."/>
            <person name="Chan A.P."/>
            <person name="Thibaud-Nissen F."/>
            <person name="Schobel S."/>
            <person name="Town C.D."/>
        </authorList>
    </citation>
    <scope>GENOME REANNOTATION</scope>
    <source>
        <strain>cv. Columbia</strain>
    </source>
</reference>
<reference key="3">
    <citation type="journal article" date="2003" name="Science">
        <title>Empirical analysis of transcriptional activity in the Arabidopsis genome.</title>
        <authorList>
            <person name="Yamada K."/>
            <person name="Lim J."/>
            <person name="Dale J.M."/>
            <person name="Chen H."/>
            <person name="Shinn P."/>
            <person name="Palm C.J."/>
            <person name="Southwick A.M."/>
            <person name="Wu H.C."/>
            <person name="Kim C.J."/>
            <person name="Nguyen M."/>
            <person name="Pham P.K."/>
            <person name="Cheuk R.F."/>
            <person name="Karlin-Newmann G."/>
            <person name="Liu S.X."/>
            <person name="Lam B."/>
            <person name="Sakano H."/>
            <person name="Wu T."/>
            <person name="Yu G."/>
            <person name="Miranda M."/>
            <person name="Quach H.L."/>
            <person name="Tripp M."/>
            <person name="Chang C.H."/>
            <person name="Lee J.M."/>
            <person name="Toriumi M.J."/>
            <person name="Chan M.M."/>
            <person name="Tang C.C."/>
            <person name="Onodera C.S."/>
            <person name="Deng J.M."/>
            <person name="Akiyama K."/>
            <person name="Ansari Y."/>
            <person name="Arakawa T."/>
            <person name="Banh J."/>
            <person name="Banno F."/>
            <person name="Bowser L."/>
            <person name="Brooks S.Y."/>
            <person name="Carninci P."/>
            <person name="Chao Q."/>
            <person name="Choy N."/>
            <person name="Enju A."/>
            <person name="Goldsmith A.D."/>
            <person name="Gurjal M."/>
            <person name="Hansen N.F."/>
            <person name="Hayashizaki Y."/>
            <person name="Johnson-Hopson C."/>
            <person name="Hsuan V.W."/>
            <person name="Iida K."/>
            <person name="Karnes M."/>
            <person name="Khan S."/>
            <person name="Koesema E."/>
            <person name="Ishida J."/>
            <person name="Jiang P.X."/>
            <person name="Jones T."/>
            <person name="Kawai J."/>
            <person name="Kamiya A."/>
            <person name="Meyers C."/>
            <person name="Nakajima M."/>
            <person name="Narusaka M."/>
            <person name="Seki M."/>
            <person name="Sakurai T."/>
            <person name="Satou M."/>
            <person name="Tamse R."/>
            <person name="Vaysberg M."/>
            <person name="Wallender E.K."/>
            <person name="Wong C."/>
            <person name="Yamamura Y."/>
            <person name="Yuan S."/>
            <person name="Shinozaki K."/>
            <person name="Davis R.W."/>
            <person name="Theologis A."/>
            <person name="Ecker J.R."/>
        </authorList>
    </citation>
    <scope>NUCLEOTIDE SEQUENCE [LARGE SCALE MRNA]</scope>
    <source>
        <strain>cv. Columbia</strain>
    </source>
</reference>
<reference key="4">
    <citation type="journal article" date="2007" name="Curr. Biol.">
        <title>Arabidopsis thaliana circadian clock is regulated by the small GTPase LIP1.</title>
        <authorList>
            <person name="Kevei E."/>
            <person name="Gyula P."/>
            <person name="Feher B."/>
            <person name="Toth R."/>
            <person name="Viczian A."/>
            <person name="Kircher S."/>
            <person name="Rea D."/>
            <person name="Dorjgotov D."/>
            <person name="Schaefer E."/>
            <person name="Millar A.J."/>
            <person name="Kozma-Bognar L."/>
            <person name="Nagy F."/>
        </authorList>
    </citation>
    <scope>FUNCTION</scope>
    <scope>INDUCTION</scope>
    <scope>SUBCELLULAR LOCATION</scope>
    <scope>DISRUPTION PHENOTYPE</scope>
</reference>
<reference key="5">
    <citation type="journal article" date="2009" name="J. Proteomics">
        <title>Phosphoproteomic analysis of nuclei-enriched fractions from Arabidopsis thaliana.</title>
        <authorList>
            <person name="Jones A.M.E."/>
            <person name="MacLean D."/>
            <person name="Studholme D.J."/>
            <person name="Serna-Sanz A."/>
            <person name="Andreasson E."/>
            <person name="Rathjen J.P."/>
            <person name="Peck S.C."/>
        </authorList>
    </citation>
    <scope>IDENTIFICATION BY MASS SPECTROMETRY [LARGE SCALE ANALYSIS]</scope>
    <source>
        <strain>cv. Columbia</strain>
    </source>
</reference>
<reference key="6">
    <citation type="journal article" date="2009" name="Plant Physiol.">
        <title>Large-scale Arabidopsis phosphoproteome profiling reveals novel chloroplast kinase substrates and phosphorylation networks.</title>
        <authorList>
            <person name="Reiland S."/>
            <person name="Messerli G."/>
            <person name="Baerenfaller K."/>
            <person name="Gerrits B."/>
            <person name="Endler A."/>
            <person name="Grossmann J."/>
            <person name="Gruissem W."/>
            <person name="Baginsky S."/>
        </authorList>
    </citation>
    <scope>IDENTIFICATION BY MASS SPECTROMETRY [LARGE SCALE ANALYSIS]</scope>
</reference>
<reference key="7">
    <citation type="journal article" date="2013" name="Plant Physiol.">
        <title>The circadian clock-associated small GTPase LIGHT INSENSITIVE PERIOD1 suppresses light-controlled endoreplication and affects tolerance to salt stress in Arabidopsis.</title>
        <authorList>
            <person name="Terecskei K."/>
            <person name="Toth R."/>
            <person name="Gyula P."/>
            <person name="Kevei E."/>
            <person name="Bindics J."/>
            <person name="Coupland G."/>
            <person name="Nagy F."/>
            <person name="Kozma-Bognar L."/>
        </authorList>
    </citation>
    <scope>FUNCTION</scope>
    <scope>DISRUPTION PHENOTYPE</scope>
    <scope>SUBCELLULAR LOCATION</scope>
</reference>
<protein>
    <recommendedName>
        <fullName evidence="5">Small GTPase LIP1</fullName>
    </recommendedName>
    <alternativeName>
        <fullName evidence="5">Protein LIGHT INSENSITIVE PERIOD 1</fullName>
    </alternativeName>
</protein>
<accession>Q9C5J9</accession>
<accession>Q9LV96</accession>
<gene>
    <name evidence="5" type="primary">LIP1</name>
    <name evidence="7" type="ordered locus">At5g64813</name>
    <name evidence="8" type="ORF">MXK3.3</name>
</gene>
<organism>
    <name type="scientific">Arabidopsis thaliana</name>
    <name type="common">Mouse-ear cress</name>
    <dbReference type="NCBI Taxonomy" id="3702"/>
    <lineage>
        <taxon>Eukaryota</taxon>
        <taxon>Viridiplantae</taxon>
        <taxon>Streptophyta</taxon>
        <taxon>Embryophyta</taxon>
        <taxon>Tracheophyta</taxon>
        <taxon>Spermatophyta</taxon>
        <taxon>Magnoliopsida</taxon>
        <taxon>eudicotyledons</taxon>
        <taxon>Gunneridae</taxon>
        <taxon>Pentapetalae</taxon>
        <taxon>rosids</taxon>
        <taxon>malvids</taxon>
        <taxon>Brassicales</taxon>
        <taxon>Brassicaceae</taxon>
        <taxon>Camelineae</taxon>
        <taxon>Arabidopsis</taxon>
    </lineage>
</organism>
<keyword id="KW-0963">Cytoplasm</keyword>
<keyword id="KW-0342">GTP-binding</keyword>
<keyword id="KW-0547">Nucleotide-binding</keyword>
<keyword id="KW-0539">Nucleus</keyword>
<keyword id="KW-1185">Reference proteome</keyword>
<comment type="function">
    <text evidence="3 4">Functional small GTPase that acts as a negative factor controlling the light-dependent period shortening of circadian rhythms and light-induced phase resetting during the subjective night (PubMed:17683937). May protect the clock from excessive or mistimed light (PubMed:17683937). Suppresses red and blue light-mediated photomorphogenesis and is required for light-controlled inhibition of endoreplication and tolerance to salt stress (PubMed:23144185). The entrainment of the circadian clock is independent from the other pleiotropic effects (PubMed:23144185). Could be a regulator of seedling establishment (PubMed:23144185).</text>
</comment>
<comment type="interaction">
    <interactant intactId="EBI-4449491">
        <id>Q9C5J9</id>
    </interactant>
    <interactant intactId="EBI-25511393">
        <id>O49403</id>
        <label>HSFA4A</label>
    </interactant>
    <organismsDiffer>false</organismsDiffer>
    <experiments>4</experiments>
</comment>
<comment type="interaction">
    <interactant intactId="EBI-4449491">
        <id>Q9C5J9</id>
    </interactant>
    <interactant intactId="EBI-1645478">
        <id>Q38845</id>
        <label>PP2AA1</label>
    </interactant>
    <organismsDiffer>false</organismsDiffer>
    <experiments>4</experiments>
</comment>
<comment type="interaction">
    <interactant intactId="EBI-4449491">
        <id>Q9C5J9</id>
    </interactant>
    <interactant intactId="EBI-963665">
        <id>Q8GXW1</id>
        <label>RGL2</label>
    </interactant>
    <organismsDiffer>false</organismsDiffer>
    <experiments>3</experiments>
</comment>
<comment type="subcellular location">
    <subcellularLocation>
        <location evidence="3 4">Nucleus</location>
    </subcellularLocation>
    <subcellularLocation>
        <location evidence="3 4">Cytoplasm</location>
    </subcellularLocation>
    <text evidence="3 4">The localization is not affected by light, but the nuclear localization is essential for the circadian function.</text>
</comment>
<comment type="induction">
    <text evidence="3">Not regulated by the circadian clock.</text>
</comment>
<comment type="disruption phenotype">
    <text evidence="3 4">Short-period phenotype even in darkness and short hypocotyls in response to red and blue light but not to far-red light (PubMed:17683937). Altered cell shape and increased ploidy levels at the seedling stage (PubMed:23144185). Hypersensitivity to salt stress (PubMed:23144185).</text>
</comment>
<comment type="miscellaneous">
    <text evidence="3">Has a GTPase activity despite the replacement of the highly conserved Glu-94 for His.</text>
</comment>
<comment type="similarity">
    <text evidence="6">Belongs to the small GTPase superfamily.</text>
</comment>
<comment type="sequence caution" evidence="6">
    <conflict type="erroneous gene model prediction">
        <sequence resource="EMBL-CDS" id="BAA97293"/>
    </conflict>
    <text>The predicted gene At5g64810 has been split into 3 genes: At5g64810, At5g64813 and At5g64816.</text>
</comment>
<feature type="chain" id="PRO_0000220618" description="Small GTPase LIP1">
    <location>
        <begin position="1"/>
        <end position="342"/>
    </location>
</feature>
<feature type="region of interest" description="Small GTPase-like">
    <location>
        <begin position="12"/>
        <end position="285"/>
    </location>
</feature>
<feature type="region of interest" description="Disordered" evidence="2">
    <location>
        <begin position="274"/>
        <end position="313"/>
    </location>
</feature>
<feature type="region of interest" description="Disordered" evidence="2">
    <location>
        <begin position="323"/>
        <end position="342"/>
    </location>
</feature>
<feature type="compositionally biased region" description="Polar residues" evidence="2">
    <location>
        <begin position="323"/>
        <end position="333"/>
    </location>
</feature>
<feature type="binding site" evidence="1">
    <location>
        <begin position="29"/>
        <end position="36"/>
    </location>
    <ligand>
        <name>GTP</name>
        <dbReference type="ChEBI" id="CHEBI:37565"/>
    </ligand>
</feature>
<feature type="binding site" evidence="1">
    <location>
        <begin position="90"/>
        <end position="94"/>
    </location>
    <ligand>
        <name>GTP</name>
        <dbReference type="ChEBI" id="CHEBI:37565"/>
    </ligand>
</feature>
<feature type="binding site" evidence="1">
    <location>
        <begin position="160"/>
        <end position="163"/>
    </location>
    <ligand>
        <name>GTP</name>
        <dbReference type="ChEBI" id="CHEBI:37565"/>
    </ligand>
</feature>
<proteinExistence type="evidence at protein level"/>
<evidence type="ECO:0000255" key="1"/>
<evidence type="ECO:0000256" key="2">
    <source>
        <dbReference type="SAM" id="MobiDB-lite"/>
    </source>
</evidence>
<evidence type="ECO:0000269" key="3">
    <source>
    </source>
</evidence>
<evidence type="ECO:0000269" key="4">
    <source>
    </source>
</evidence>
<evidence type="ECO:0000303" key="5">
    <source>
    </source>
</evidence>
<evidence type="ECO:0000305" key="6"/>
<evidence type="ECO:0000312" key="7">
    <source>
        <dbReference type="Araport" id="AT5G64813"/>
    </source>
</evidence>
<evidence type="ECO:0000312" key="8">
    <source>
        <dbReference type="EMBL" id="BAA97293.1"/>
    </source>
</evidence>
<dbReference type="EMBL" id="AB019236">
    <property type="protein sequence ID" value="BAA97293.1"/>
    <property type="status" value="ALT_SEQ"/>
    <property type="molecule type" value="Genomic_DNA"/>
</dbReference>
<dbReference type="EMBL" id="CP002688">
    <property type="protein sequence ID" value="AED97954.1"/>
    <property type="molecule type" value="Genomic_DNA"/>
</dbReference>
<dbReference type="EMBL" id="CP002688">
    <property type="protein sequence ID" value="ANM70069.1"/>
    <property type="molecule type" value="Genomic_DNA"/>
</dbReference>
<dbReference type="EMBL" id="CP002688">
    <property type="protein sequence ID" value="ANM70070.1"/>
    <property type="molecule type" value="Genomic_DNA"/>
</dbReference>
<dbReference type="EMBL" id="AF360203">
    <property type="protein sequence ID" value="AAK25913.1"/>
    <property type="molecule type" value="mRNA"/>
</dbReference>
<dbReference type="EMBL" id="AY040050">
    <property type="protein sequence ID" value="AAK64108.1"/>
    <property type="molecule type" value="mRNA"/>
</dbReference>
<dbReference type="RefSeq" id="NP_001318878.1">
    <property type="nucleotide sequence ID" value="NM_001345650.1"/>
</dbReference>
<dbReference type="RefSeq" id="NP_001331706.1">
    <property type="nucleotide sequence ID" value="NM_001345651.1"/>
</dbReference>
<dbReference type="RefSeq" id="NP_568996.1">
    <property type="nucleotide sequence ID" value="NM_125878.3"/>
</dbReference>
<dbReference type="SMR" id="Q9C5J9"/>
<dbReference type="BioGRID" id="21845">
    <property type="interactions" value="6"/>
</dbReference>
<dbReference type="FunCoup" id="Q9C5J9">
    <property type="interactions" value="1952"/>
</dbReference>
<dbReference type="IntAct" id="Q9C5J9">
    <property type="interactions" value="6"/>
</dbReference>
<dbReference type="STRING" id="3702.Q9C5J9"/>
<dbReference type="iPTMnet" id="Q9C5J9"/>
<dbReference type="PaxDb" id="3702-AT5G64813.1"/>
<dbReference type="ProteomicsDB" id="238419"/>
<dbReference type="EnsemblPlants" id="AT5G64813.1">
    <property type="protein sequence ID" value="AT5G64813.1"/>
    <property type="gene ID" value="AT5G64813"/>
</dbReference>
<dbReference type="EnsemblPlants" id="AT5G64813.2">
    <property type="protein sequence ID" value="AT5G64813.2"/>
    <property type="gene ID" value="AT5G64813"/>
</dbReference>
<dbReference type="EnsemblPlants" id="AT5G64813.3">
    <property type="protein sequence ID" value="AT5G64813.3"/>
    <property type="gene ID" value="AT5G64813"/>
</dbReference>
<dbReference type="GeneID" id="836603"/>
<dbReference type="Gramene" id="AT5G64813.1">
    <property type="protein sequence ID" value="AT5G64813.1"/>
    <property type="gene ID" value="AT5G64813"/>
</dbReference>
<dbReference type="Gramene" id="AT5G64813.2">
    <property type="protein sequence ID" value="AT5G64813.2"/>
    <property type="gene ID" value="AT5G64813"/>
</dbReference>
<dbReference type="Gramene" id="AT5G64813.3">
    <property type="protein sequence ID" value="AT5G64813.3"/>
    <property type="gene ID" value="AT5G64813"/>
</dbReference>
<dbReference type="KEGG" id="ath:AT5G64813"/>
<dbReference type="Araport" id="AT5G64813"/>
<dbReference type="TAIR" id="AT5G64813">
    <property type="gene designation" value="LIP1"/>
</dbReference>
<dbReference type="eggNOG" id="ENOG502QT3S">
    <property type="taxonomic scope" value="Eukaryota"/>
</dbReference>
<dbReference type="HOGENOM" id="CLU_061105_0_0_1"/>
<dbReference type="InParanoid" id="Q9C5J9"/>
<dbReference type="OMA" id="VELWDVC"/>
<dbReference type="OrthoDB" id="5914890at2759"/>
<dbReference type="PhylomeDB" id="Q9C5J9"/>
<dbReference type="BioCyc" id="ARA:AT5G64813-MONOMER"/>
<dbReference type="PRO" id="PR:Q9C5J9"/>
<dbReference type="Proteomes" id="UP000006548">
    <property type="component" value="Chromosome 5"/>
</dbReference>
<dbReference type="ExpressionAtlas" id="Q9C5J9">
    <property type="expression patterns" value="baseline and differential"/>
</dbReference>
<dbReference type="GO" id="GO:0005737">
    <property type="term" value="C:cytoplasm"/>
    <property type="evidence" value="ECO:0000314"/>
    <property type="project" value="TAIR"/>
</dbReference>
<dbReference type="GO" id="GO:0005634">
    <property type="term" value="C:nucleus"/>
    <property type="evidence" value="ECO:0000314"/>
    <property type="project" value="TAIR"/>
</dbReference>
<dbReference type="GO" id="GO:0005525">
    <property type="term" value="F:GTP binding"/>
    <property type="evidence" value="ECO:0007669"/>
    <property type="project" value="UniProtKB-KW"/>
</dbReference>
<dbReference type="GO" id="GO:0003924">
    <property type="term" value="F:GTPase activity"/>
    <property type="evidence" value="ECO:0000314"/>
    <property type="project" value="TAIR"/>
</dbReference>
<dbReference type="GO" id="GO:0032922">
    <property type="term" value="P:circadian regulation of gene expression"/>
    <property type="evidence" value="ECO:0000315"/>
    <property type="project" value="TAIR"/>
</dbReference>
<dbReference type="GO" id="GO:0009640">
    <property type="term" value="P:photomorphogenesis"/>
    <property type="evidence" value="ECO:0000315"/>
    <property type="project" value="TAIR"/>
</dbReference>
<dbReference type="CDD" id="cd04102">
    <property type="entry name" value="RabL3"/>
    <property type="match status" value="1"/>
</dbReference>
<dbReference type="FunFam" id="3.40.50.300:FF:000713">
    <property type="entry name" value="Ras-related small GTP-binding family protein"/>
    <property type="match status" value="1"/>
</dbReference>
<dbReference type="Gene3D" id="3.40.50.300">
    <property type="entry name" value="P-loop containing nucleotide triphosphate hydrolases"/>
    <property type="match status" value="1"/>
</dbReference>
<dbReference type="InterPro" id="IPR027417">
    <property type="entry name" value="P-loop_NTPase"/>
</dbReference>
<dbReference type="InterPro" id="IPR025662">
    <property type="entry name" value="Sigma_54_int_dom_ATP-bd_1"/>
</dbReference>
<dbReference type="InterPro" id="IPR001806">
    <property type="entry name" value="Small_GTPase"/>
</dbReference>
<dbReference type="PANTHER" id="PTHR24073">
    <property type="entry name" value="DRAB5-RELATED"/>
    <property type="match status" value="1"/>
</dbReference>
<dbReference type="Pfam" id="PF00071">
    <property type="entry name" value="Ras"/>
    <property type="match status" value="1"/>
</dbReference>
<dbReference type="PRINTS" id="PR00449">
    <property type="entry name" value="RASTRNSFRMNG"/>
</dbReference>
<dbReference type="SMART" id="SM00175">
    <property type="entry name" value="RAB"/>
    <property type="match status" value="1"/>
</dbReference>
<dbReference type="SUPFAM" id="SSF52540">
    <property type="entry name" value="P-loop containing nucleoside triphosphate hydrolases"/>
    <property type="match status" value="1"/>
</dbReference>
<dbReference type="PROSITE" id="PS51419">
    <property type="entry name" value="RAB"/>
    <property type="match status" value="1"/>
</dbReference>